<reference key="1">
    <citation type="journal article" date="2005" name="Nature">
        <title>Genomic sequence of the pathogenic and allergenic filamentous fungus Aspergillus fumigatus.</title>
        <authorList>
            <person name="Nierman W.C."/>
            <person name="Pain A."/>
            <person name="Anderson M.J."/>
            <person name="Wortman J.R."/>
            <person name="Kim H.S."/>
            <person name="Arroyo J."/>
            <person name="Berriman M."/>
            <person name="Abe K."/>
            <person name="Archer D.B."/>
            <person name="Bermejo C."/>
            <person name="Bennett J.W."/>
            <person name="Bowyer P."/>
            <person name="Chen D."/>
            <person name="Collins M."/>
            <person name="Coulsen R."/>
            <person name="Davies R."/>
            <person name="Dyer P.S."/>
            <person name="Farman M.L."/>
            <person name="Fedorova N."/>
            <person name="Fedorova N.D."/>
            <person name="Feldblyum T.V."/>
            <person name="Fischer R."/>
            <person name="Fosker N."/>
            <person name="Fraser A."/>
            <person name="Garcia J.L."/>
            <person name="Garcia M.J."/>
            <person name="Goble A."/>
            <person name="Goldman G.H."/>
            <person name="Gomi K."/>
            <person name="Griffith-Jones S."/>
            <person name="Gwilliam R."/>
            <person name="Haas B.J."/>
            <person name="Haas H."/>
            <person name="Harris D.E."/>
            <person name="Horiuchi H."/>
            <person name="Huang J."/>
            <person name="Humphray S."/>
            <person name="Jimenez J."/>
            <person name="Keller N."/>
            <person name="Khouri H."/>
            <person name="Kitamoto K."/>
            <person name="Kobayashi T."/>
            <person name="Konzack S."/>
            <person name="Kulkarni R."/>
            <person name="Kumagai T."/>
            <person name="Lafton A."/>
            <person name="Latge J.-P."/>
            <person name="Li W."/>
            <person name="Lord A."/>
            <person name="Lu C."/>
            <person name="Majoros W.H."/>
            <person name="May G.S."/>
            <person name="Miller B.L."/>
            <person name="Mohamoud Y."/>
            <person name="Molina M."/>
            <person name="Monod M."/>
            <person name="Mouyna I."/>
            <person name="Mulligan S."/>
            <person name="Murphy L.D."/>
            <person name="O'Neil S."/>
            <person name="Paulsen I."/>
            <person name="Penalva M.A."/>
            <person name="Pertea M."/>
            <person name="Price C."/>
            <person name="Pritchard B.L."/>
            <person name="Quail M.A."/>
            <person name="Rabbinowitsch E."/>
            <person name="Rawlins N."/>
            <person name="Rajandream M.A."/>
            <person name="Reichard U."/>
            <person name="Renauld H."/>
            <person name="Robson G.D."/>
            <person name="Rodriguez de Cordoba S."/>
            <person name="Rodriguez-Pena J.M."/>
            <person name="Ronning C.M."/>
            <person name="Rutter S."/>
            <person name="Salzberg S.L."/>
            <person name="Sanchez M."/>
            <person name="Sanchez-Ferrero J.C."/>
            <person name="Saunders D."/>
            <person name="Seeger K."/>
            <person name="Squares R."/>
            <person name="Squares S."/>
            <person name="Takeuchi M."/>
            <person name="Tekaia F."/>
            <person name="Turner G."/>
            <person name="Vazquez de Aldana C.R."/>
            <person name="Weidman J."/>
            <person name="White O."/>
            <person name="Woodward J.R."/>
            <person name="Yu J.-H."/>
            <person name="Fraser C.M."/>
            <person name="Galagan J.E."/>
            <person name="Asai K."/>
            <person name="Machida M."/>
            <person name="Hall N."/>
            <person name="Barrell B.G."/>
            <person name="Denning D.W."/>
        </authorList>
    </citation>
    <scope>NUCLEOTIDE SEQUENCE [LARGE SCALE GENOMIC DNA]</scope>
    <source>
        <strain>ATCC MYA-4609 / CBS 101355 / FGSC A1100 / Af293</strain>
    </source>
</reference>
<reference key="2">
    <citation type="journal article" date="2017" name="J. Fungi">
        <title>Role of Hydrophobins in Aspergillus fumigatus.</title>
        <authorList>
            <person name="Valsecchi I."/>
            <person name="Dupres V."/>
            <person name="Stephen-Victor E."/>
            <person name="Guijarro J.I."/>
            <person name="Gibbons J."/>
            <person name="Beau R."/>
            <person name="Bayry J."/>
            <person name="Coppee J.Y."/>
            <person name="Lafont F."/>
            <person name="Latge J.P."/>
            <person name="Beauvais A."/>
        </authorList>
    </citation>
    <scope>FUNCTION</scope>
    <scope>DOMAIN</scope>
    <scope>INDUCTION</scope>
</reference>
<protein>
    <recommendedName>
        <fullName evidence="4">Class III hydrophobin G</fullName>
    </recommendedName>
    <alternativeName>
        <fullName evidence="4">Rodlet protein G</fullName>
    </alternativeName>
</protein>
<sequence>MKPSIVTFLMLAAVTAAVSAEDPTMSALKSRVEEIAGQVHGVEDQETTPDLSHCVEPKLCCGSLTTPLDPILDPILLSLGINAAQIVGSVGLLCHPWTEECSSAPQCCTEANLLGGTLALGCSKL</sequence>
<comment type="function">
    <text evidence="3 5 6">Aerial growth, conidiation, and dispersal of filamentous fungi in the environment rely upon a capability of their secreting small amphipathic proteins called hydrophobins (HPBs) with low sequence identity. Class I can self-assemble into an outermost layer of rodlet bundles on aerial cell surfaces, conferring cellular hydrophobicity that supports fungal growth, development and dispersal; whereas Class II form highly ordered films at water-air interfaces through intermolecular interactions but contribute nothing to the rodlet structure (Probable). RodF and rodG belong to Class III, which contains hydrophobins with intermediate (between classes I and II) or atypical characteristics (Probable). RodG, unlike rodA, is not required for rodlet formation (PubMed:29371496).</text>
</comment>
<comment type="subunit">
    <text evidence="1">Self-assembles to form functional amyloid fibrils called rodlets. Self-assembly into fibrillar rodlets occurs spontaneously at hydrophobic:hydrophilic interfaces and the rodlets further associate laterally to form amphipathic monolayers.</text>
</comment>
<comment type="subcellular location">
    <subcellularLocation>
        <location evidence="1">Secreted</location>
    </subcellularLocation>
    <subcellularLocation>
        <location evidence="1">Secreted</location>
        <location evidence="1">Cell wall</location>
    </subcellularLocation>
</comment>
<comment type="induction">
    <text evidence="3">No expression is detected in sporulating cultures, nor in vegetative cultures or during infection.</text>
</comment>
<comment type="domain">
    <text evidence="3">RodG contains a signal peptide and the conserved Cys-pattern. RodG shows a class I hydrophobicity pattern, but an unusually short C5-C6 region for class I or class II hydrophobins and unusually long C3-C4 region for a class II hydrophobin.</text>
</comment>
<comment type="similarity">
    <text evidence="5">Belongs to the fungal hydrophobin family.</text>
</comment>
<keyword id="KW-0134">Cell wall</keyword>
<keyword id="KW-1015">Disulfide bond</keyword>
<keyword id="KW-1185">Reference proteome</keyword>
<keyword id="KW-0964">Secreted</keyword>
<keyword id="KW-0732">Signal</keyword>
<dbReference type="EMBL" id="AAHF01000001">
    <property type="protein sequence ID" value="EAL93760.2"/>
    <property type="molecule type" value="Genomic_DNA"/>
</dbReference>
<dbReference type="RefSeq" id="XP_755798.2">
    <property type="nucleotide sequence ID" value="XM_750705.2"/>
</dbReference>
<dbReference type="STRING" id="330879.Q4X055"/>
<dbReference type="EnsemblFungi" id="EAL93760">
    <property type="protein sequence ID" value="EAL93760"/>
    <property type="gene ID" value="AFUA_2G14661"/>
</dbReference>
<dbReference type="GeneID" id="3513278"/>
<dbReference type="KEGG" id="afm:AFUA_2G14661"/>
<dbReference type="VEuPathDB" id="FungiDB:Afu2g14661"/>
<dbReference type="HOGENOM" id="CLU_2159235_0_0_1"/>
<dbReference type="InParanoid" id="Q4X055"/>
<dbReference type="OMA" id="LCHPWTE"/>
<dbReference type="OrthoDB" id="4225815at2759"/>
<dbReference type="Proteomes" id="UP000002530">
    <property type="component" value="Chromosome 2"/>
</dbReference>
<dbReference type="GO" id="GO:0005576">
    <property type="term" value="C:extracellular region"/>
    <property type="evidence" value="ECO:0007669"/>
    <property type="project" value="UniProtKB-KW"/>
</dbReference>
<dbReference type="GO" id="GO:0009277">
    <property type="term" value="C:fungal-type cell wall"/>
    <property type="evidence" value="ECO:0007669"/>
    <property type="project" value="InterPro"/>
</dbReference>
<dbReference type="GO" id="GO:0005199">
    <property type="term" value="F:structural constituent of cell wall"/>
    <property type="evidence" value="ECO:0007669"/>
    <property type="project" value="InterPro"/>
</dbReference>
<dbReference type="CDD" id="cd23507">
    <property type="entry name" value="hydrophobin_I"/>
    <property type="match status" value="1"/>
</dbReference>
<dbReference type="InterPro" id="IPR001338">
    <property type="entry name" value="Hydrophobin"/>
</dbReference>
<dbReference type="Pfam" id="PF01185">
    <property type="entry name" value="Hydrophobin"/>
    <property type="match status" value="1"/>
</dbReference>
<feature type="signal peptide" evidence="2">
    <location>
        <begin position="1"/>
        <end position="20"/>
    </location>
</feature>
<feature type="chain" id="PRO_5013984168" description="Class III hydrophobin G">
    <location>
        <begin position="21"/>
        <end position="125"/>
    </location>
</feature>
<feature type="disulfide bond" evidence="1">
    <location>
        <begin position="54"/>
        <end position="107"/>
    </location>
</feature>
<feature type="disulfide bond" evidence="1">
    <location>
        <begin position="60"/>
        <end position="101"/>
    </location>
</feature>
<feature type="disulfide bond" evidence="1">
    <location>
        <begin position="61"/>
        <end position="94"/>
    </location>
</feature>
<feature type="disulfide bond" evidence="1">
    <location>
        <begin position="108"/>
        <end position="122"/>
    </location>
</feature>
<name>RODG_ASPFU</name>
<organism>
    <name type="scientific">Aspergillus fumigatus (strain ATCC MYA-4609 / CBS 101355 / FGSC A1100 / Af293)</name>
    <name type="common">Neosartorya fumigata</name>
    <dbReference type="NCBI Taxonomy" id="330879"/>
    <lineage>
        <taxon>Eukaryota</taxon>
        <taxon>Fungi</taxon>
        <taxon>Dikarya</taxon>
        <taxon>Ascomycota</taxon>
        <taxon>Pezizomycotina</taxon>
        <taxon>Eurotiomycetes</taxon>
        <taxon>Eurotiomycetidae</taxon>
        <taxon>Eurotiales</taxon>
        <taxon>Aspergillaceae</taxon>
        <taxon>Aspergillus</taxon>
        <taxon>Aspergillus subgen. Fumigati</taxon>
    </lineage>
</organism>
<evidence type="ECO:0000250" key="1">
    <source>
        <dbReference type="UniProtKB" id="Q04571"/>
    </source>
</evidence>
<evidence type="ECO:0000255" key="2"/>
<evidence type="ECO:0000269" key="3">
    <source>
    </source>
</evidence>
<evidence type="ECO:0000303" key="4">
    <source>
    </source>
</evidence>
<evidence type="ECO:0000305" key="5"/>
<evidence type="ECO:0000305" key="6">
    <source>
    </source>
</evidence>
<accession>Q4X055</accession>
<gene>
    <name evidence="4" type="primary">rodG</name>
    <name type="ORF">AFUA_2G14661</name>
</gene>
<proteinExistence type="evidence at transcript level"/>